<reference key="1">
    <citation type="submission" date="2007-09" db="EMBL/GenBank/DDBJ databases">
        <title>Complete genome sequence of Rickettsia akari.</title>
        <authorList>
            <person name="Madan A."/>
            <person name="Fahey J."/>
            <person name="Helton E."/>
            <person name="Ketteman M."/>
            <person name="Madan A."/>
            <person name="Rodrigues S."/>
            <person name="Sanchez A."/>
            <person name="Whiting M."/>
            <person name="Dasch G."/>
            <person name="Eremeeva M."/>
        </authorList>
    </citation>
    <scope>NUCLEOTIDE SEQUENCE [LARGE SCALE GENOMIC DNA]</scope>
    <source>
        <strain>Hartford</strain>
    </source>
</reference>
<proteinExistence type="inferred from homology"/>
<gene>
    <name type="ordered locus">A1C_06510</name>
</gene>
<evidence type="ECO:0000255" key="1">
    <source>
        <dbReference type="HAMAP-Rule" id="MF_00634"/>
    </source>
</evidence>
<sequence>MDKFYNYNSSLHQVLLNLKVKPNSKQNLISNFVIINNIPYLKLSIKATPEKGKANEEIINYLAKAWKLSRSNIEIIKGHTHSVKTILIKNINEDYLNFIINSYIR</sequence>
<feature type="chain" id="PRO_1000056783" description="UPF0235 protein A1C_06510">
    <location>
        <begin position="1"/>
        <end position="105"/>
    </location>
</feature>
<accession>A8GQ50</accession>
<protein>
    <recommendedName>
        <fullName evidence="1">UPF0235 protein A1C_06510</fullName>
    </recommendedName>
</protein>
<organism>
    <name type="scientific">Rickettsia akari (strain Hartford)</name>
    <dbReference type="NCBI Taxonomy" id="293614"/>
    <lineage>
        <taxon>Bacteria</taxon>
        <taxon>Pseudomonadati</taxon>
        <taxon>Pseudomonadota</taxon>
        <taxon>Alphaproteobacteria</taxon>
        <taxon>Rickettsiales</taxon>
        <taxon>Rickettsiaceae</taxon>
        <taxon>Rickettsieae</taxon>
        <taxon>Rickettsia</taxon>
        <taxon>spotted fever group</taxon>
    </lineage>
</organism>
<comment type="similarity">
    <text evidence="1">Belongs to the UPF0235 family.</text>
</comment>
<name>Y6510_RICAH</name>
<dbReference type="EMBL" id="CP000847">
    <property type="protein sequence ID" value="ABV75525.1"/>
    <property type="molecule type" value="Genomic_DNA"/>
</dbReference>
<dbReference type="RefSeq" id="WP_012150154.1">
    <property type="nucleotide sequence ID" value="NC_009881.1"/>
</dbReference>
<dbReference type="SMR" id="A8GQ50"/>
<dbReference type="KEGG" id="rak:A1C_06510"/>
<dbReference type="eggNOG" id="COG1872">
    <property type="taxonomic scope" value="Bacteria"/>
</dbReference>
<dbReference type="HOGENOM" id="CLU_130694_6_2_5"/>
<dbReference type="Proteomes" id="UP000006830">
    <property type="component" value="Chromosome"/>
</dbReference>
<dbReference type="GO" id="GO:0005737">
    <property type="term" value="C:cytoplasm"/>
    <property type="evidence" value="ECO:0007669"/>
    <property type="project" value="TreeGrafter"/>
</dbReference>
<dbReference type="Gene3D" id="3.30.1200.10">
    <property type="entry name" value="YggU-like"/>
    <property type="match status" value="1"/>
</dbReference>
<dbReference type="HAMAP" id="MF_00634">
    <property type="entry name" value="UPF0235"/>
    <property type="match status" value="1"/>
</dbReference>
<dbReference type="InterPro" id="IPR003746">
    <property type="entry name" value="DUF167"/>
</dbReference>
<dbReference type="InterPro" id="IPR036591">
    <property type="entry name" value="YggU-like_sf"/>
</dbReference>
<dbReference type="NCBIfam" id="TIGR00251">
    <property type="entry name" value="DUF167 family protein"/>
    <property type="match status" value="1"/>
</dbReference>
<dbReference type="NCBIfam" id="NF002419">
    <property type="entry name" value="PRK01530.1"/>
    <property type="match status" value="1"/>
</dbReference>
<dbReference type="PANTHER" id="PTHR13420">
    <property type="entry name" value="UPF0235 PROTEIN C15ORF40"/>
    <property type="match status" value="1"/>
</dbReference>
<dbReference type="PANTHER" id="PTHR13420:SF7">
    <property type="entry name" value="UPF0235 PROTEIN C15ORF40"/>
    <property type="match status" value="1"/>
</dbReference>
<dbReference type="Pfam" id="PF02594">
    <property type="entry name" value="DUF167"/>
    <property type="match status" value="1"/>
</dbReference>
<dbReference type="SMART" id="SM01152">
    <property type="entry name" value="DUF167"/>
    <property type="match status" value="1"/>
</dbReference>
<dbReference type="SUPFAM" id="SSF69786">
    <property type="entry name" value="YggU-like"/>
    <property type="match status" value="1"/>
</dbReference>